<organism>
    <name type="scientific">Xanthomonas campestris pv. campestris (strain 8004)</name>
    <dbReference type="NCBI Taxonomy" id="314565"/>
    <lineage>
        <taxon>Bacteria</taxon>
        <taxon>Pseudomonadati</taxon>
        <taxon>Pseudomonadota</taxon>
        <taxon>Gammaproteobacteria</taxon>
        <taxon>Lysobacterales</taxon>
        <taxon>Lysobacteraceae</taxon>
        <taxon>Xanthomonas</taxon>
    </lineage>
</organism>
<reference key="1">
    <citation type="journal article" date="2005" name="Genome Res.">
        <title>Comparative and functional genomic analyses of the pathogenicity of phytopathogen Xanthomonas campestris pv. campestris.</title>
        <authorList>
            <person name="Qian W."/>
            <person name="Jia Y."/>
            <person name="Ren S.-X."/>
            <person name="He Y.-Q."/>
            <person name="Feng J.-X."/>
            <person name="Lu L.-F."/>
            <person name="Sun Q."/>
            <person name="Ying G."/>
            <person name="Tang D.-J."/>
            <person name="Tang H."/>
            <person name="Wu W."/>
            <person name="Hao P."/>
            <person name="Wang L."/>
            <person name="Jiang B.-L."/>
            <person name="Zeng S."/>
            <person name="Gu W.-Y."/>
            <person name="Lu G."/>
            <person name="Rong L."/>
            <person name="Tian Y."/>
            <person name="Yao Z."/>
            <person name="Fu G."/>
            <person name="Chen B."/>
            <person name="Fang R."/>
            <person name="Qiang B."/>
            <person name="Chen Z."/>
            <person name="Zhao G.-P."/>
            <person name="Tang J.-L."/>
            <person name="He C."/>
        </authorList>
    </citation>
    <scope>NUCLEOTIDE SEQUENCE [LARGE SCALE GENOMIC DNA]</scope>
    <source>
        <strain>8004</strain>
    </source>
</reference>
<feature type="chain" id="PRO_0000257696" description="Biosynthetic peptidoglycan transglycosylase">
    <location>
        <begin position="1"/>
        <end position="246"/>
    </location>
</feature>
<feature type="transmembrane region" description="Helical" evidence="1">
    <location>
        <begin position="20"/>
        <end position="42"/>
    </location>
</feature>
<keyword id="KW-0997">Cell inner membrane</keyword>
<keyword id="KW-1003">Cell membrane</keyword>
<keyword id="KW-0133">Cell shape</keyword>
<keyword id="KW-0961">Cell wall biogenesis/degradation</keyword>
<keyword id="KW-0328">Glycosyltransferase</keyword>
<keyword id="KW-0472">Membrane</keyword>
<keyword id="KW-0573">Peptidoglycan synthesis</keyword>
<keyword id="KW-0808">Transferase</keyword>
<keyword id="KW-0812">Transmembrane</keyword>
<keyword id="KW-1133">Transmembrane helix</keyword>
<comment type="function">
    <text evidence="1">Peptidoglycan polymerase that catalyzes glycan chain elongation from lipid-linked precursors.</text>
</comment>
<comment type="catalytic activity">
    <reaction evidence="1">
        <text>[GlcNAc-(1-&gt;4)-Mur2Ac(oyl-L-Ala-gamma-D-Glu-L-Lys-D-Ala-D-Ala)](n)-di-trans,octa-cis-undecaprenyl diphosphate + beta-D-GlcNAc-(1-&gt;4)-Mur2Ac(oyl-L-Ala-gamma-D-Glu-L-Lys-D-Ala-D-Ala)-di-trans,octa-cis-undecaprenyl diphosphate = [GlcNAc-(1-&gt;4)-Mur2Ac(oyl-L-Ala-gamma-D-Glu-L-Lys-D-Ala-D-Ala)](n+1)-di-trans,octa-cis-undecaprenyl diphosphate + di-trans,octa-cis-undecaprenyl diphosphate + H(+)</text>
        <dbReference type="Rhea" id="RHEA:23708"/>
        <dbReference type="Rhea" id="RHEA-COMP:9602"/>
        <dbReference type="Rhea" id="RHEA-COMP:9603"/>
        <dbReference type="ChEBI" id="CHEBI:15378"/>
        <dbReference type="ChEBI" id="CHEBI:58405"/>
        <dbReference type="ChEBI" id="CHEBI:60033"/>
        <dbReference type="ChEBI" id="CHEBI:78435"/>
        <dbReference type="EC" id="2.4.99.28"/>
    </reaction>
</comment>
<comment type="pathway">
    <text evidence="1">Cell wall biogenesis; peptidoglycan biosynthesis.</text>
</comment>
<comment type="subcellular location">
    <subcellularLocation>
        <location evidence="1">Cell inner membrane</location>
        <topology evidence="1">Single-pass membrane protein</topology>
    </subcellularLocation>
</comment>
<comment type="similarity">
    <text evidence="1">Belongs to the glycosyltransferase 51 family.</text>
</comment>
<accession>Q4UXB0</accession>
<gene>
    <name evidence="1" type="primary">mtgA</name>
    <name type="ordered locus">XC_1244</name>
</gene>
<evidence type="ECO:0000255" key="1">
    <source>
        <dbReference type="HAMAP-Rule" id="MF_00766"/>
    </source>
</evidence>
<proteinExistence type="inferred from homology"/>
<name>MTGA_XANC8</name>
<sequence length="246" mass="27658">MGTDGLDDKQARPPRRARRSLRWVLAAPLLFAAASVLQVLALRIIDPPISTVMVGRYLEAWGEGEAGFSLHHQWRDLDEIAPSLPISVVAAEDQQFPSHHGFDLQAIEKARDYNARGGRVRGASTISQQVAKNVFLWQGRSWVRKGLEAWYTLLIELFWPKQRILEMYVNVAEFGDGIYGAQAAARQFWGKDASRLTPTESARLAAVLPSPRRYDARRPGAYVQRRTAWIQRQARQLGGPGYLQAP</sequence>
<dbReference type="EC" id="2.4.99.28" evidence="1"/>
<dbReference type="EMBL" id="CP000050">
    <property type="protein sequence ID" value="AAY48313.1"/>
    <property type="molecule type" value="Genomic_DNA"/>
</dbReference>
<dbReference type="RefSeq" id="WP_011037989.1">
    <property type="nucleotide sequence ID" value="NZ_CP155948.1"/>
</dbReference>
<dbReference type="SMR" id="Q4UXB0"/>
<dbReference type="CAZy" id="GT51">
    <property type="family name" value="Glycosyltransferase Family 51"/>
</dbReference>
<dbReference type="KEGG" id="xcb:XC_1244"/>
<dbReference type="HOGENOM" id="CLU_006354_1_1_6"/>
<dbReference type="UniPathway" id="UPA00219"/>
<dbReference type="Proteomes" id="UP000000420">
    <property type="component" value="Chromosome"/>
</dbReference>
<dbReference type="GO" id="GO:0009274">
    <property type="term" value="C:peptidoglycan-based cell wall"/>
    <property type="evidence" value="ECO:0007669"/>
    <property type="project" value="InterPro"/>
</dbReference>
<dbReference type="GO" id="GO:0005886">
    <property type="term" value="C:plasma membrane"/>
    <property type="evidence" value="ECO:0007669"/>
    <property type="project" value="UniProtKB-SubCell"/>
</dbReference>
<dbReference type="GO" id="GO:0016763">
    <property type="term" value="F:pentosyltransferase activity"/>
    <property type="evidence" value="ECO:0007669"/>
    <property type="project" value="InterPro"/>
</dbReference>
<dbReference type="GO" id="GO:0008955">
    <property type="term" value="F:peptidoglycan glycosyltransferase activity"/>
    <property type="evidence" value="ECO:0007669"/>
    <property type="project" value="UniProtKB-UniRule"/>
</dbReference>
<dbReference type="GO" id="GO:0071555">
    <property type="term" value="P:cell wall organization"/>
    <property type="evidence" value="ECO:0007669"/>
    <property type="project" value="UniProtKB-KW"/>
</dbReference>
<dbReference type="GO" id="GO:0009252">
    <property type="term" value="P:peptidoglycan biosynthetic process"/>
    <property type="evidence" value="ECO:0007669"/>
    <property type="project" value="UniProtKB-UniRule"/>
</dbReference>
<dbReference type="GO" id="GO:0008360">
    <property type="term" value="P:regulation of cell shape"/>
    <property type="evidence" value="ECO:0007669"/>
    <property type="project" value="UniProtKB-KW"/>
</dbReference>
<dbReference type="Gene3D" id="1.10.3810.10">
    <property type="entry name" value="Biosynthetic peptidoglycan transglycosylase-like"/>
    <property type="match status" value="1"/>
</dbReference>
<dbReference type="HAMAP" id="MF_00766">
    <property type="entry name" value="PGT_MtgA"/>
    <property type="match status" value="1"/>
</dbReference>
<dbReference type="InterPro" id="IPR001264">
    <property type="entry name" value="Glyco_trans_51"/>
</dbReference>
<dbReference type="InterPro" id="IPR023346">
    <property type="entry name" value="Lysozyme-like_dom_sf"/>
</dbReference>
<dbReference type="InterPro" id="IPR036950">
    <property type="entry name" value="PBP_transglycosylase"/>
</dbReference>
<dbReference type="InterPro" id="IPR011812">
    <property type="entry name" value="Pep_trsgly"/>
</dbReference>
<dbReference type="NCBIfam" id="TIGR02070">
    <property type="entry name" value="mono_pep_trsgly"/>
    <property type="match status" value="1"/>
</dbReference>
<dbReference type="PANTHER" id="PTHR30400:SF0">
    <property type="entry name" value="BIOSYNTHETIC PEPTIDOGLYCAN TRANSGLYCOSYLASE"/>
    <property type="match status" value="1"/>
</dbReference>
<dbReference type="PANTHER" id="PTHR30400">
    <property type="entry name" value="MONOFUNCTIONAL BIOSYNTHETIC PEPTIDOGLYCAN TRANSGLYCOSYLASE"/>
    <property type="match status" value="1"/>
</dbReference>
<dbReference type="Pfam" id="PF00912">
    <property type="entry name" value="Transgly"/>
    <property type="match status" value="1"/>
</dbReference>
<dbReference type="SUPFAM" id="SSF53955">
    <property type="entry name" value="Lysozyme-like"/>
    <property type="match status" value="1"/>
</dbReference>
<protein>
    <recommendedName>
        <fullName evidence="1">Biosynthetic peptidoglycan transglycosylase</fullName>
        <ecNumber evidence="1">2.4.99.28</ecNumber>
    </recommendedName>
    <alternativeName>
        <fullName evidence="1">Glycan polymerase</fullName>
    </alternativeName>
    <alternativeName>
        <fullName evidence="1">Peptidoglycan glycosyltransferase MtgA</fullName>
        <shortName evidence="1">PGT</shortName>
    </alternativeName>
</protein>